<evidence type="ECO:0000255" key="1">
    <source>
        <dbReference type="HAMAP-Rule" id="MF_00736"/>
    </source>
</evidence>
<evidence type="ECO:0000305" key="2"/>
<sequence length="141" mass="14837">MAKKIAGYVKLQIPAGKATPAPPVGPALGQHGVNIMGFCKEFNERTAKDAGLVIPVVITVYADRSFSFITKTPPAAVLLKKACKIESGSGKPNKDKVAKITMDEVRKIAEQKMPDLNAASVDAATKMIAGTARSMGIVVVE</sequence>
<proteinExistence type="inferred from homology"/>
<dbReference type="EMBL" id="CP001348">
    <property type="protein sequence ID" value="ACL74695.1"/>
    <property type="molecule type" value="Genomic_DNA"/>
</dbReference>
<dbReference type="RefSeq" id="WP_012634760.1">
    <property type="nucleotide sequence ID" value="NC_011898.1"/>
</dbReference>
<dbReference type="SMR" id="B8I5B5"/>
<dbReference type="STRING" id="394503.Ccel_0308"/>
<dbReference type="KEGG" id="cce:Ccel_0308"/>
<dbReference type="eggNOG" id="COG0080">
    <property type="taxonomic scope" value="Bacteria"/>
</dbReference>
<dbReference type="HOGENOM" id="CLU_074237_2_1_9"/>
<dbReference type="OrthoDB" id="9802408at2"/>
<dbReference type="Proteomes" id="UP000001349">
    <property type="component" value="Chromosome"/>
</dbReference>
<dbReference type="GO" id="GO:0022625">
    <property type="term" value="C:cytosolic large ribosomal subunit"/>
    <property type="evidence" value="ECO:0007669"/>
    <property type="project" value="TreeGrafter"/>
</dbReference>
<dbReference type="GO" id="GO:0070180">
    <property type="term" value="F:large ribosomal subunit rRNA binding"/>
    <property type="evidence" value="ECO:0007669"/>
    <property type="project" value="UniProtKB-UniRule"/>
</dbReference>
<dbReference type="GO" id="GO:0003735">
    <property type="term" value="F:structural constituent of ribosome"/>
    <property type="evidence" value="ECO:0007669"/>
    <property type="project" value="InterPro"/>
</dbReference>
<dbReference type="GO" id="GO:0006412">
    <property type="term" value="P:translation"/>
    <property type="evidence" value="ECO:0007669"/>
    <property type="project" value="UniProtKB-UniRule"/>
</dbReference>
<dbReference type="CDD" id="cd00349">
    <property type="entry name" value="Ribosomal_L11"/>
    <property type="match status" value="1"/>
</dbReference>
<dbReference type="FunFam" id="1.10.10.250:FF:000001">
    <property type="entry name" value="50S ribosomal protein L11"/>
    <property type="match status" value="1"/>
</dbReference>
<dbReference type="FunFam" id="3.30.1550.10:FF:000001">
    <property type="entry name" value="50S ribosomal protein L11"/>
    <property type="match status" value="1"/>
</dbReference>
<dbReference type="Gene3D" id="1.10.10.250">
    <property type="entry name" value="Ribosomal protein L11, C-terminal domain"/>
    <property type="match status" value="1"/>
</dbReference>
<dbReference type="Gene3D" id="3.30.1550.10">
    <property type="entry name" value="Ribosomal protein L11/L12, N-terminal domain"/>
    <property type="match status" value="1"/>
</dbReference>
<dbReference type="HAMAP" id="MF_00736">
    <property type="entry name" value="Ribosomal_uL11"/>
    <property type="match status" value="1"/>
</dbReference>
<dbReference type="InterPro" id="IPR000911">
    <property type="entry name" value="Ribosomal_uL11"/>
</dbReference>
<dbReference type="InterPro" id="IPR006519">
    <property type="entry name" value="Ribosomal_uL11_bac-typ"/>
</dbReference>
<dbReference type="InterPro" id="IPR020783">
    <property type="entry name" value="Ribosomal_uL11_C"/>
</dbReference>
<dbReference type="InterPro" id="IPR036769">
    <property type="entry name" value="Ribosomal_uL11_C_sf"/>
</dbReference>
<dbReference type="InterPro" id="IPR020785">
    <property type="entry name" value="Ribosomal_uL11_CS"/>
</dbReference>
<dbReference type="InterPro" id="IPR020784">
    <property type="entry name" value="Ribosomal_uL11_N"/>
</dbReference>
<dbReference type="InterPro" id="IPR036796">
    <property type="entry name" value="Ribosomal_uL11_N_sf"/>
</dbReference>
<dbReference type="NCBIfam" id="TIGR01632">
    <property type="entry name" value="L11_bact"/>
    <property type="match status" value="1"/>
</dbReference>
<dbReference type="PANTHER" id="PTHR11661">
    <property type="entry name" value="60S RIBOSOMAL PROTEIN L12"/>
    <property type="match status" value="1"/>
</dbReference>
<dbReference type="PANTHER" id="PTHR11661:SF1">
    <property type="entry name" value="LARGE RIBOSOMAL SUBUNIT PROTEIN UL11M"/>
    <property type="match status" value="1"/>
</dbReference>
<dbReference type="Pfam" id="PF00298">
    <property type="entry name" value="Ribosomal_L11"/>
    <property type="match status" value="1"/>
</dbReference>
<dbReference type="Pfam" id="PF03946">
    <property type="entry name" value="Ribosomal_L11_N"/>
    <property type="match status" value="1"/>
</dbReference>
<dbReference type="SMART" id="SM00649">
    <property type="entry name" value="RL11"/>
    <property type="match status" value="1"/>
</dbReference>
<dbReference type="SUPFAM" id="SSF54747">
    <property type="entry name" value="Ribosomal L11/L12e N-terminal domain"/>
    <property type="match status" value="1"/>
</dbReference>
<dbReference type="SUPFAM" id="SSF46906">
    <property type="entry name" value="Ribosomal protein L11, C-terminal domain"/>
    <property type="match status" value="1"/>
</dbReference>
<dbReference type="PROSITE" id="PS00359">
    <property type="entry name" value="RIBOSOMAL_L11"/>
    <property type="match status" value="1"/>
</dbReference>
<feature type="chain" id="PRO_1000195605" description="Large ribosomal subunit protein uL11">
    <location>
        <begin position="1"/>
        <end position="141"/>
    </location>
</feature>
<organism>
    <name type="scientific">Ruminiclostridium cellulolyticum (strain ATCC 35319 / DSM 5812 / JCM 6584 / H10)</name>
    <name type="common">Clostridium cellulolyticum</name>
    <dbReference type="NCBI Taxonomy" id="394503"/>
    <lineage>
        <taxon>Bacteria</taxon>
        <taxon>Bacillati</taxon>
        <taxon>Bacillota</taxon>
        <taxon>Clostridia</taxon>
        <taxon>Eubacteriales</taxon>
        <taxon>Oscillospiraceae</taxon>
        <taxon>Ruminiclostridium</taxon>
    </lineage>
</organism>
<gene>
    <name evidence="1" type="primary">rplK</name>
    <name type="ordered locus">Ccel_0308</name>
</gene>
<reference key="1">
    <citation type="submission" date="2009-01" db="EMBL/GenBank/DDBJ databases">
        <title>Complete sequence of Clostridium cellulolyticum H10.</title>
        <authorList>
            <consortium name="US DOE Joint Genome Institute"/>
            <person name="Lucas S."/>
            <person name="Copeland A."/>
            <person name="Lapidus A."/>
            <person name="Glavina del Rio T."/>
            <person name="Dalin E."/>
            <person name="Tice H."/>
            <person name="Bruce D."/>
            <person name="Goodwin L."/>
            <person name="Pitluck S."/>
            <person name="Chertkov O."/>
            <person name="Saunders E."/>
            <person name="Brettin T."/>
            <person name="Detter J.C."/>
            <person name="Han C."/>
            <person name="Larimer F."/>
            <person name="Land M."/>
            <person name="Hauser L."/>
            <person name="Kyrpides N."/>
            <person name="Ivanova N."/>
            <person name="Zhou J."/>
            <person name="Richardson P."/>
        </authorList>
    </citation>
    <scope>NUCLEOTIDE SEQUENCE [LARGE SCALE GENOMIC DNA]</scope>
    <source>
        <strain>ATCC 35319 / DSM 5812 / JCM 6584 / H10</strain>
    </source>
</reference>
<accession>B8I5B5</accession>
<protein>
    <recommendedName>
        <fullName evidence="1">Large ribosomal subunit protein uL11</fullName>
    </recommendedName>
    <alternativeName>
        <fullName evidence="2">50S ribosomal protein L11</fullName>
    </alternativeName>
</protein>
<comment type="function">
    <text evidence="1">Forms part of the ribosomal stalk which helps the ribosome interact with GTP-bound translation factors.</text>
</comment>
<comment type="subunit">
    <text evidence="1">Part of the ribosomal stalk of the 50S ribosomal subunit. Interacts with L10 and the large rRNA to form the base of the stalk. L10 forms an elongated spine to which L12 dimers bind in a sequential fashion forming a multimeric L10(L12)X complex.</text>
</comment>
<comment type="PTM">
    <text evidence="1">One or more lysine residues are methylated.</text>
</comment>
<comment type="similarity">
    <text evidence="1">Belongs to the universal ribosomal protein uL11 family.</text>
</comment>
<keyword id="KW-0488">Methylation</keyword>
<keyword id="KW-1185">Reference proteome</keyword>
<keyword id="KW-0687">Ribonucleoprotein</keyword>
<keyword id="KW-0689">Ribosomal protein</keyword>
<keyword id="KW-0694">RNA-binding</keyword>
<keyword id="KW-0699">rRNA-binding</keyword>
<name>RL11_RUMCH</name>